<accession>Q9WUD6</accession>
<organism>
    <name type="scientific">Mus musculus</name>
    <name type="common">Mouse</name>
    <dbReference type="NCBI Taxonomy" id="10090"/>
    <lineage>
        <taxon>Eukaryota</taxon>
        <taxon>Metazoa</taxon>
        <taxon>Chordata</taxon>
        <taxon>Craniata</taxon>
        <taxon>Vertebrata</taxon>
        <taxon>Euteleostomi</taxon>
        <taxon>Mammalia</taxon>
        <taxon>Eutheria</taxon>
        <taxon>Euarchontoglires</taxon>
        <taxon>Glires</taxon>
        <taxon>Rodentia</taxon>
        <taxon>Myomorpha</taxon>
        <taxon>Muroidea</taxon>
        <taxon>Muridae</taxon>
        <taxon>Murinae</taxon>
        <taxon>Mus</taxon>
        <taxon>Mus</taxon>
    </lineage>
</organism>
<sequence length="350" mass="38576">MFLMKPVCVLLVTCVLHRSHAWSVNNFLMTGPKAYLVYSSSVAAGAQSGIEECKYQFAWDRWNCPERALQLSSHGGLRSANRETAFVHAISSAGVMYTLTRNCSLGDFDNCGCDDSRNGQLGGQGWLWGGCSDNVGFGEAISKQFVDALETGQDARAAMNLHNNEAGRKAVKGTMKRTCKCHGVSGSCTTQTCWLQLPEFREVGAHLKEKYHAALKVDLLQGAGNSAAGRGAIADTFRSISTRELVHLEDSPDYCLENKTLGLLGTEGRECLRRGRALGRWERRSCRRLCGDCGLAVEERRAETVSSCNCKFHWCCAVRCEQCRRRVTKYFCSRAERPPRGAAHKPGKNS</sequence>
<reference key="1">
    <citation type="journal article" date="1999" name="Mamm. Genome">
        <title>Mouse Wnt8B is expressed in the developing forebrain and maps to chromosome 19.</title>
        <authorList>
            <person name="Richardson M."/>
            <person name="Redmond D."/>
            <person name="Watson C.J."/>
            <person name="Mason J.O."/>
        </authorList>
    </citation>
    <scope>NUCLEOTIDE SEQUENCE [MRNA]</scope>
    <source>
        <strain>C57BL/6J</strain>
    </source>
</reference>
<gene>
    <name type="primary">Wnt8b</name>
</gene>
<comment type="function">
    <text>Ligand for members of the frizzled family of seven transmembrane receptors. May play an important role in the development and differentiation of certain forebrain structures, notably the hippocampus.</text>
</comment>
<comment type="subcellular location">
    <subcellularLocation>
        <location>Secreted</location>
        <location>Extracellular space</location>
        <location>Extracellular matrix</location>
    </subcellularLocation>
</comment>
<comment type="PTM">
    <text evidence="1 2">Palmitoleoylation is required for efficient binding to frizzled receptors (By similarity). Depalmitoleoylation leads to Wnt signaling pathway inhibition (By similarity).</text>
</comment>
<comment type="PTM">
    <text evidence="1">Proteolytic processing by TIKI1 and TIKI2 promotes oxidation and formation of large disulfide-bond oligomers, leading to inactivation of WNT8B.</text>
</comment>
<comment type="similarity">
    <text evidence="4">Belongs to the Wnt family.</text>
</comment>
<proteinExistence type="evidence at transcript level"/>
<keyword id="KW-0217">Developmental protein</keyword>
<keyword id="KW-1015">Disulfide bond</keyword>
<keyword id="KW-0272">Extracellular matrix</keyword>
<keyword id="KW-0325">Glycoprotein</keyword>
<keyword id="KW-0449">Lipoprotein</keyword>
<keyword id="KW-1185">Reference proteome</keyword>
<keyword id="KW-0964">Secreted</keyword>
<keyword id="KW-0732">Signal</keyword>
<keyword id="KW-0879">Wnt signaling pathway</keyword>
<evidence type="ECO:0000250" key="1">
    <source>
        <dbReference type="UniProtKB" id="P28026"/>
    </source>
</evidence>
<evidence type="ECO:0000250" key="2">
    <source>
        <dbReference type="UniProtKB" id="P56704"/>
    </source>
</evidence>
<evidence type="ECO:0000255" key="3"/>
<evidence type="ECO:0000305" key="4"/>
<protein>
    <recommendedName>
        <fullName>Protein Wnt-8b</fullName>
    </recommendedName>
</protein>
<name>WNT8B_MOUSE</name>
<dbReference type="EMBL" id="AF130349">
    <property type="protein sequence ID" value="AAD31816.1"/>
    <property type="molecule type" value="mRNA"/>
</dbReference>
<dbReference type="CCDS" id="CCDS50446.1"/>
<dbReference type="RefSeq" id="NP_035850.3">
    <property type="nucleotide sequence ID" value="NM_011720.4"/>
</dbReference>
<dbReference type="SMR" id="Q9WUD6"/>
<dbReference type="FunCoup" id="Q9WUD6">
    <property type="interactions" value="454"/>
</dbReference>
<dbReference type="STRING" id="10090.ENSMUSP00000042867"/>
<dbReference type="GlyCosmos" id="Q9WUD6">
    <property type="glycosylation" value="2 sites, No reported glycans"/>
</dbReference>
<dbReference type="GlyGen" id="Q9WUD6">
    <property type="glycosylation" value="2 sites"/>
</dbReference>
<dbReference type="PhosphoSitePlus" id="Q9WUD6"/>
<dbReference type="PaxDb" id="10090-ENSMUSP00000042867"/>
<dbReference type="GeneID" id="22423"/>
<dbReference type="KEGG" id="mmu:22423"/>
<dbReference type="AGR" id="MGI:109485"/>
<dbReference type="CTD" id="7479"/>
<dbReference type="MGI" id="MGI:109485">
    <property type="gene designation" value="Wnt8b"/>
</dbReference>
<dbReference type="eggNOG" id="KOG3913">
    <property type="taxonomic scope" value="Eukaryota"/>
</dbReference>
<dbReference type="InParanoid" id="Q9WUD6"/>
<dbReference type="OrthoDB" id="5945655at2759"/>
<dbReference type="PhylomeDB" id="Q9WUD6"/>
<dbReference type="Reactome" id="R-MMU-3238698">
    <property type="pathway name" value="WNT ligand biogenesis and trafficking"/>
</dbReference>
<dbReference type="Reactome" id="R-MMU-4641262">
    <property type="pathway name" value="Disassembly of the destruction complex and recruitment of AXIN to the membrane"/>
</dbReference>
<dbReference type="PRO" id="PR:Q9WUD6"/>
<dbReference type="Proteomes" id="UP000000589">
    <property type="component" value="Unplaced"/>
</dbReference>
<dbReference type="RNAct" id="Q9WUD6">
    <property type="molecule type" value="protein"/>
</dbReference>
<dbReference type="GO" id="GO:0005576">
    <property type="term" value="C:extracellular region"/>
    <property type="evidence" value="ECO:0007669"/>
    <property type="project" value="UniProtKB-KW"/>
</dbReference>
<dbReference type="GO" id="GO:0005102">
    <property type="term" value="F:signaling receptor binding"/>
    <property type="evidence" value="ECO:0000304"/>
    <property type="project" value="MGI"/>
</dbReference>
<dbReference type="GO" id="GO:0009887">
    <property type="term" value="P:animal organ morphogenesis"/>
    <property type="evidence" value="ECO:0000304"/>
    <property type="project" value="MGI"/>
</dbReference>
<dbReference type="GO" id="GO:0007267">
    <property type="term" value="P:cell-cell signaling"/>
    <property type="evidence" value="ECO:0000304"/>
    <property type="project" value="MGI"/>
</dbReference>
<dbReference type="GO" id="GO:0010467">
    <property type="term" value="P:gene expression"/>
    <property type="evidence" value="ECO:0000315"/>
    <property type="project" value="MGI"/>
</dbReference>
<dbReference type="GO" id="GO:0010629">
    <property type="term" value="P:negative regulation of gene expression"/>
    <property type="evidence" value="ECO:0000315"/>
    <property type="project" value="MGI"/>
</dbReference>
<dbReference type="GO" id="GO:0010628">
    <property type="term" value="P:positive regulation of gene expression"/>
    <property type="evidence" value="ECO:0000315"/>
    <property type="project" value="MGI"/>
</dbReference>
<dbReference type="GO" id="GO:0007165">
    <property type="term" value="P:signal transduction"/>
    <property type="evidence" value="ECO:0000304"/>
    <property type="project" value="MGI"/>
</dbReference>
<dbReference type="GO" id="GO:0016055">
    <property type="term" value="P:Wnt signaling pathway"/>
    <property type="evidence" value="ECO:0007669"/>
    <property type="project" value="UniProtKB-KW"/>
</dbReference>
<dbReference type="FunFam" id="3.30.2460.20:FF:000003">
    <property type="entry name" value="Protein Wnt"/>
    <property type="match status" value="1"/>
</dbReference>
<dbReference type="Gene3D" id="3.30.2460.20">
    <property type="match status" value="1"/>
</dbReference>
<dbReference type="InterPro" id="IPR005817">
    <property type="entry name" value="Wnt"/>
</dbReference>
<dbReference type="InterPro" id="IPR013301">
    <property type="entry name" value="Wnt8"/>
</dbReference>
<dbReference type="InterPro" id="IPR043158">
    <property type="entry name" value="Wnt_C"/>
</dbReference>
<dbReference type="InterPro" id="IPR018161">
    <property type="entry name" value="Wnt_CS"/>
</dbReference>
<dbReference type="PANTHER" id="PTHR12027:SF94">
    <property type="entry name" value="PROTEIN WNT-8B"/>
    <property type="match status" value="1"/>
</dbReference>
<dbReference type="PANTHER" id="PTHR12027">
    <property type="entry name" value="WNT RELATED"/>
    <property type="match status" value="1"/>
</dbReference>
<dbReference type="Pfam" id="PF00110">
    <property type="entry name" value="wnt"/>
    <property type="match status" value="1"/>
</dbReference>
<dbReference type="PRINTS" id="PR01892">
    <property type="entry name" value="WNT8PROTEIN"/>
</dbReference>
<dbReference type="PRINTS" id="PR01349">
    <property type="entry name" value="WNTPROTEIN"/>
</dbReference>
<dbReference type="SMART" id="SM00097">
    <property type="entry name" value="WNT1"/>
    <property type="match status" value="1"/>
</dbReference>
<dbReference type="PROSITE" id="PS00246">
    <property type="entry name" value="WNT1"/>
    <property type="match status" value="1"/>
</dbReference>
<feature type="signal peptide" evidence="3">
    <location>
        <begin position="1"/>
        <end position="21"/>
    </location>
</feature>
<feature type="chain" id="PRO_0000041451" description="Protein Wnt-8b">
    <location>
        <begin position="22"/>
        <end position="350"/>
    </location>
</feature>
<feature type="lipid moiety-binding region" description="O-palmitoleoyl serine" evidence="1">
    <location>
        <position position="185"/>
    </location>
</feature>
<feature type="glycosylation site" description="N-linked (GlcNAc...) asparagine" evidence="3">
    <location>
        <position position="102"/>
    </location>
</feature>
<feature type="glycosylation site" description="N-linked (GlcNAc...) asparagine" evidence="3">
    <location>
        <position position="258"/>
    </location>
</feature>
<feature type="disulfide bond" evidence="1">
    <location>
        <begin position="53"/>
        <end position="64"/>
    </location>
</feature>
<feature type="disulfide bond" evidence="1">
    <location>
        <begin position="103"/>
        <end position="111"/>
    </location>
</feature>
<feature type="disulfide bond" evidence="1">
    <location>
        <begin position="113"/>
        <end position="131"/>
    </location>
</feature>
<feature type="disulfide bond" evidence="1">
    <location>
        <begin position="179"/>
        <end position="193"/>
    </location>
</feature>
<feature type="disulfide bond" evidence="1">
    <location>
        <begin position="181"/>
        <end position="188"/>
    </location>
</feature>
<feature type="disulfide bond" evidence="1">
    <location>
        <begin position="255"/>
        <end position="293"/>
    </location>
</feature>
<feature type="disulfide bond" evidence="1">
    <location>
        <begin position="271"/>
        <end position="286"/>
    </location>
</feature>
<feature type="disulfide bond" evidence="1">
    <location>
        <begin position="290"/>
        <end position="332"/>
    </location>
</feature>
<feature type="disulfide bond" evidence="1">
    <location>
        <begin position="308"/>
        <end position="323"/>
    </location>
</feature>
<feature type="disulfide bond" evidence="1">
    <location>
        <begin position="310"/>
        <end position="320"/>
    </location>
</feature>
<feature type="disulfide bond" evidence="1">
    <location>
        <begin position="315"/>
        <end position="316"/>
    </location>
</feature>